<organism>
    <name type="scientific">Saccharomyces cerevisiae (strain ATCC 204508 / S288c)</name>
    <name type="common">Baker's yeast</name>
    <dbReference type="NCBI Taxonomy" id="559292"/>
    <lineage>
        <taxon>Eukaryota</taxon>
        <taxon>Fungi</taxon>
        <taxon>Dikarya</taxon>
        <taxon>Ascomycota</taxon>
        <taxon>Saccharomycotina</taxon>
        <taxon>Saccharomycetes</taxon>
        <taxon>Saccharomycetales</taxon>
        <taxon>Saccharomycetaceae</taxon>
        <taxon>Saccharomyces</taxon>
    </lineage>
</organism>
<reference key="1">
    <citation type="journal article" date="1994" name="Yeast">
        <title>Analysis of a 70 kb region on the right arm of yeast chromosome II.</title>
        <authorList>
            <person name="Mannhaupt G."/>
            <person name="Stucka R."/>
            <person name="Ehnle S."/>
            <person name="Vetter I."/>
            <person name="Feldmann H."/>
        </authorList>
    </citation>
    <scope>NUCLEOTIDE SEQUENCE [GENOMIC DNA]</scope>
    <source>
        <strain>ATCC 204508 / S288c</strain>
    </source>
</reference>
<reference key="2">
    <citation type="journal article" date="1994" name="EMBO J.">
        <title>Complete DNA sequence of yeast chromosome II.</title>
        <authorList>
            <person name="Feldmann H."/>
            <person name="Aigle M."/>
            <person name="Aljinovic G."/>
            <person name="Andre B."/>
            <person name="Baclet M.C."/>
            <person name="Barthe C."/>
            <person name="Baur A."/>
            <person name="Becam A.-M."/>
            <person name="Biteau N."/>
            <person name="Boles E."/>
            <person name="Brandt T."/>
            <person name="Brendel M."/>
            <person name="Brueckner M."/>
            <person name="Bussereau F."/>
            <person name="Christiansen C."/>
            <person name="Contreras R."/>
            <person name="Crouzet M."/>
            <person name="Cziepluch C."/>
            <person name="Demolis N."/>
            <person name="Delaveau T."/>
            <person name="Doignon F."/>
            <person name="Domdey H."/>
            <person name="Duesterhus S."/>
            <person name="Dubois E."/>
            <person name="Dujon B."/>
            <person name="El Bakkoury M."/>
            <person name="Entian K.-D."/>
            <person name="Feuermann M."/>
            <person name="Fiers W."/>
            <person name="Fobo G.M."/>
            <person name="Fritz C."/>
            <person name="Gassenhuber J."/>
            <person name="Glansdorff N."/>
            <person name="Goffeau A."/>
            <person name="Grivell L.A."/>
            <person name="de Haan M."/>
            <person name="Hein C."/>
            <person name="Herbert C.J."/>
            <person name="Hollenberg C.P."/>
            <person name="Holmstroem K."/>
            <person name="Jacq C."/>
            <person name="Jacquet M."/>
            <person name="Jauniaux J.-C."/>
            <person name="Jonniaux J.-L."/>
            <person name="Kallesoee T."/>
            <person name="Kiesau P."/>
            <person name="Kirchrath L."/>
            <person name="Koetter P."/>
            <person name="Korol S."/>
            <person name="Liebl S."/>
            <person name="Logghe M."/>
            <person name="Lohan A.J.E."/>
            <person name="Louis E.J."/>
            <person name="Li Z.Y."/>
            <person name="Maat M.J."/>
            <person name="Mallet L."/>
            <person name="Mannhaupt G."/>
            <person name="Messenguy F."/>
            <person name="Miosga T."/>
            <person name="Molemans F."/>
            <person name="Mueller S."/>
            <person name="Nasr F."/>
            <person name="Obermaier B."/>
            <person name="Perea J."/>
            <person name="Pierard A."/>
            <person name="Piravandi E."/>
            <person name="Pohl F.M."/>
            <person name="Pohl T.M."/>
            <person name="Potier S."/>
            <person name="Proft M."/>
            <person name="Purnelle B."/>
            <person name="Ramezani Rad M."/>
            <person name="Rieger M."/>
            <person name="Rose M."/>
            <person name="Schaaff-Gerstenschlaeger I."/>
            <person name="Scherens B."/>
            <person name="Schwarzlose C."/>
            <person name="Skala J."/>
            <person name="Slonimski P.P."/>
            <person name="Smits P.H.M."/>
            <person name="Souciet J.-L."/>
            <person name="Steensma H.Y."/>
            <person name="Stucka R."/>
            <person name="Urrestarazu L.A."/>
            <person name="van der Aart Q.J.M."/>
            <person name="Van Dyck L."/>
            <person name="Vassarotti A."/>
            <person name="Vetter I."/>
            <person name="Vierendeels F."/>
            <person name="Vissers S."/>
            <person name="Wagner G."/>
            <person name="de Wergifosse P."/>
            <person name="Wolfe K.H."/>
            <person name="Zagulski M."/>
            <person name="Zimmermann F.K."/>
            <person name="Mewes H.-W."/>
            <person name="Kleine K."/>
        </authorList>
    </citation>
    <scope>NUCLEOTIDE SEQUENCE [LARGE SCALE GENOMIC DNA]</scope>
    <source>
        <strain>ATCC 204508 / S288c</strain>
    </source>
</reference>
<reference key="3">
    <citation type="journal article" date="2014" name="G3 (Bethesda)">
        <title>The reference genome sequence of Saccharomyces cerevisiae: Then and now.</title>
        <authorList>
            <person name="Engel S.R."/>
            <person name="Dietrich F.S."/>
            <person name="Fisk D.G."/>
            <person name="Binkley G."/>
            <person name="Balakrishnan R."/>
            <person name="Costanzo M.C."/>
            <person name="Dwight S.S."/>
            <person name="Hitz B.C."/>
            <person name="Karra K."/>
            <person name="Nash R.S."/>
            <person name="Weng S."/>
            <person name="Wong E.D."/>
            <person name="Lloyd P."/>
            <person name="Skrzypek M.S."/>
            <person name="Miyasato S.R."/>
            <person name="Simison M."/>
            <person name="Cherry J.M."/>
        </authorList>
    </citation>
    <scope>GENOME REANNOTATION</scope>
    <source>
        <strain>ATCC 204508 / S288c</strain>
    </source>
</reference>
<reference key="4">
    <citation type="journal article" date="1991" name="FEBS Lett.">
        <title>Extended N-terminal sequencing of proteins of the large ribosomal subunit from yeast mitochondria.</title>
        <authorList>
            <person name="Grohmann L."/>
            <person name="Graack H.-R."/>
            <person name="Kruft V."/>
            <person name="Choli T."/>
            <person name="Goldschmidt-Reisin S."/>
            <person name="Kitakawa M."/>
        </authorList>
    </citation>
    <scope>PROTEIN SEQUENCE OF 15-51</scope>
    <scope>SUBUNIT</scope>
    <source>
        <strain>07173</strain>
    </source>
</reference>
<reference key="5">
    <citation type="journal article" date="2001" name="Mol. Cell. Biol.">
        <title>Mitochondrial translation of Saccharomyces cerevisiae COX2 mRNA is controlled by the nucleotide sequence specifying the pre-Cox2p leader peptide.</title>
        <authorList>
            <person name="Bonnefoy N."/>
            <person name="Bsat N."/>
            <person name="Fox T.D."/>
        </authorList>
    </citation>
    <scope>FUNCTION</scope>
</reference>
<reference key="6">
    <citation type="journal article" date="2002" name="Eur. J. Biochem.">
        <title>Tag-mediated isolation of yeast mitochondrial ribosome and mass spectrometric identification of its new components.</title>
        <authorList>
            <person name="Gan X."/>
            <person name="Kitakawa M."/>
            <person name="Yoshino K."/>
            <person name="Oshiro N."/>
            <person name="Yonezawa K."/>
            <person name="Isono K."/>
        </authorList>
    </citation>
    <scope>IDENTIFICATION IN THE MITOCHONDRIAL RIBOSOMAL LARGE COMPLEX</scope>
    <scope>IDENTIFICATION BY MASS SPECTROMETRY</scope>
</reference>
<reference key="7">
    <citation type="journal article" date="2003" name="Nature">
        <title>Sequencing and comparison of yeast species to identify genes and regulatory elements.</title>
        <authorList>
            <person name="Kellis M."/>
            <person name="Patterson N."/>
            <person name="Endrizzi M."/>
            <person name="Birren B.W."/>
            <person name="Lander E.S."/>
        </authorList>
    </citation>
    <scope>IDENTIFICATION OF PROBABLE INITIATION SITE</scope>
</reference>
<reference key="8">
    <citation type="journal article" date="2003" name="Nature">
        <title>Global analysis of protein localization in budding yeast.</title>
        <authorList>
            <person name="Huh W.-K."/>
            <person name="Falvo J.V."/>
            <person name="Gerke L.C."/>
            <person name="Carroll A.S."/>
            <person name="Howson R.W."/>
            <person name="Weissman J.S."/>
            <person name="O'Shea E.K."/>
        </authorList>
    </citation>
    <scope>SUBCELLULAR LOCATION [LARGE SCALE ANALYSIS]</scope>
</reference>
<reference key="9">
    <citation type="journal article" date="2003" name="Proc. Natl. Acad. Sci. U.S.A.">
        <title>The proteome of Saccharomyces cerevisiae mitochondria.</title>
        <authorList>
            <person name="Sickmann A."/>
            <person name="Reinders J."/>
            <person name="Wagner Y."/>
            <person name="Joppich C."/>
            <person name="Zahedi R.P."/>
            <person name="Meyer H.E."/>
            <person name="Schoenfisch B."/>
            <person name="Perschil I."/>
            <person name="Chacinska A."/>
            <person name="Guiard B."/>
            <person name="Rehling P."/>
            <person name="Pfanner N."/>
            <person name="Meisinger C."/>
        </authorList>
    </citation>
    <scope>SUBCELLULAR LOCATION [LARGE SCALE ANALYSIS]</scope>
    <source>
        <strain>ATCC 76625 / YPH499</strain>
    </source>
</reference>
<reference key="10">
    <citation type="journal article" date="2004" name="Genetics">
        <title>MrpL36p, a highly diverged L31 ribosomal protein homolog with additional functional domains in Saccharomyces cerevisiae mitochondria.</title>
        <authorList>
            <person name="Williams E.H."/>
            <person name="Perez-Martinez X."/>
            <person name="Fox T.D."/>
        </authorList>
    </citation>
    <scope>FUNCTION</scope>
    <scope>DOMAIN</scope>
</reference>
<reference key="11">
    <citation type="journal article" date="2015" name="Nat. Commun.">
        <title>Organization of the mitochondrial translation machinery studied in situ by cryoelectron tomography.</title>
        <authorList>
            <person name="Pfeffer S."/>
            <person name="Woellhaf M.W."/>
            <person name="Herrmann J.M."/>
            <person name="Forster F."/>
        </authorList>
    </citation>
    <scope>SUBCELLULAR LOCATION</scope>
</reference>
<reference key="12">
    <citation type="journal article" date="2014" name="Science">
        <title>Structure of the yeast mitochondrial large ribosomal subunit.</title>
        <authorList>
            <person name="Amunts A."/>
            <person name="Brown A."/>
            <person name="Bai X.C."/>
            <person name="Llacer J.L."/>
            <person name="Hussain T."/>
            <person name="Emsley P."/>
            <person name="Long F."/>
            <person name="Murshudov G."/>
            <person name="Scheres S.H."/>
            <person name="Ramakrishnan V."/>
        </authorList>
    </citation>
    <scope>STRUCTURE BY ELECTRON MICROSCOPY (3.20 ANGSTROMS)</scope>
    <scope>SUBUNIT</scope>
</reference>
<evidence type="ECO:0000256" key="1">
    <source>
        <dbReference type="SAM" id="MobiDB-lite"/>
    </source>
</evidence>
<evidence type="ECO:0000269" key="2">
    <source>
    </source>
</evidence>
<evidence type="ECO:0000269" key="3">
    <source>
    </source>
</evidence>
<evidence type="ECO:0000269" key="4">
    <source>
    </source>
</evidence>
<evidence type="ECO:0000269" key="5">
    <source>
    </source>
</evidence>
<evidence type="ECO:0000269" key="6">
    <source>
    </source>
</evidence>
<evidence type="ECO:0000269" key="7">
    <source>
    </source>
</evidence>
<evidence type="ECO:0000269" key="8">
    <source>
    </source>
</evidence>
<evidence type="ECO:0000269" key="9">
    <source>
    </source>
</evidence>
<evidence type="ECO:0000303" key="10">
    <source>
    </source>
</evidence>
<evidence type="ECO:0000305" key="11"/>
<evidence type="ECO:0000305" key="12">
    <source>
    </source>
</evidence>
<evidence type="ECO:0000305" key="13">
    <source>
    </source>
</evidence>
<dbReference type="EMBL" id="X78993">
    <property type="protein sequence ID" value="CAA55624.1"/>
    <property type="status" value="ALT_INIT"/>
    <property type="molecule type" value="Genomic_DNA"/>
</dbReference>
<dbReference type="EMBL" id="Z35991">
    <property type="protein sequence ID" value="CAA85079.1"/>
    <property type="status" value="ALT_INIT"/>
    <property type="molecule type" value="Genomic_DNA"/>
</dbReference>
<dbReference type="EMBL" id="BK006936">
    <property type="protein sequence ID" value="DAA07240.1"/>
    <property type="molecule type" value="Genomic_DNA"/>
</dbReference>
<dbReference type="PIR" id="S44701">
    <property type="entry name" value="S44701"/>
</dbReference>
<dbReference type="RefSeq" id="NP_009680.2">
    <property type="nucleotide sequence ID" value="NM_001178470.1"/>
</dbReference>
<dbReference type="PDB" id="3J6B">
    <property type="method" value="EM"/>
    <property type="resolution" value="3.20 A"/>
    <property type="chains" value="V=1-177"/>
</dbReference>
<dbReference type="PDB" id="5MRC">
    <property type="method" value="EM"/>
    <property type="resolution" value="3.25 A"/>
    <property type="chains" value="V=1-177"/>
</dbReference>
<dbReference type="PDB" id="5MRE">
    <property type="method" value="EM"/>
    <property type="resolution" value="3.75 A"/>
    <property type="chains" value="V=1-177"/>
</dbReference>
<dbReference type="PDB" id="5MRF">
    <property type="method" value="EM"/>
    <property type="resolution" value="4.97 A"/>
    <property type="chains" value="V=1-177"/>
</dbReference>
<dbReference type="PDBsum" id="3J6B"/>
<dbReference type="PDBsum" id="5MRC"/>
<dbReference type="PDBsum" id="5MRE"/>
<dbReference type="PDBsum" id="5MRF"/>
<dbReference type="EMDB" id="EMD-3551"/>
<dbReference type="EMDB" id="EMD-3552"/>
<dbReference type="EMDB" id="EMD-3553"/>
<dbReference type="SMR" id="P36531"/>
<dbReference type="BioGRID" id="32824">
    <property type="interactions" value="183"/>
</dbReference>
<dbReference type="ComplexPortal" id="CPX-1602">
    <property type="entry name" value="54S mitochondrial large ribosomal subunit"/>
</dbReference>
<dbReference type="DIP" id="DIP-4628N"/>
<dbReference type="FunCoup" id="P36531">
    <property type="interactions" value="215"/>
</dbReference>
<dbReference type="IntAct" id="P36531">
    <property type="interactions" value="67"/>
</dbReference>
<dbReference type="MINT" id="P36531"/>
<dbReference type="STRING" id="4932.YBR122C"/>
<dbReference type="PaxDb" id="4932-YBR122C"/>
<dbReference type="PeptideAtlas" id="P36531"/>
<dbReference type="EnsemblFungi" id="YBR122C_mRNA">
    <property type="protein sequence ID" value="YBR122C"/>
    <property type="gene ID" value="YBR122C"/>
</dbReference>
<dbReference type="GeneID" id="852419"/>
<dbReference type="KEGG" id="sce:YBR122C"/>
<dbReference type="AGR" id="SGD:S000000326"/>
<dbReference type="SGD" id="S000000326">
    <property type="gene designation" value="MRPL36"/>
</dbReference>
<dbReference type="VEuPathDB" id="FungiDB:YBR122C"/>
<dbReference type="eggNOG" id="ENOG502RZ6E">
    <property type="taxonomic scope" value="Eukaryota"/>
</dbReference>
<dbReference type="HOGENOM" id="CLU_130029_1_0_1"/>
<dbReference type="InParanoid" id="P36531"/>
<dbReference type="OMA" id="RRSQFPK"/>
<dbReference type="OrthoDB" id="5587740at2759"/>
<dbReference type="BioCyc" id="YEAST:G3O-29079-MONOMER"/>
<dbReference type="BioGRID-ORCS" id="852419">
    <property type="hits" value="3 hits in 10 CRISPR screens"/>
</dbReference>
<dbReference type="PRO" id="PR:P36531"/>
<dbReference type="Proteomes" id="UP000002311">
    <property type="component" value="Chromosome II"/>
</dbReference>
<dbReference type="RNAct" id="P36531">
    <property type="molecule type" value="protein"/>
</dbReference>
<dbReference type="GO" id="GO:0005743">
    <property type="term" value="C:mitochondrial inner membrane"/>
    <property type="evidence" value="ECO:0000303"/>
    <property type="project" value="ComplexPortal"/>
</dbReference>
<dbReference type="GO" id="GO:0005762">
    <property type="term" value="C:mitochondrial large ribosomal subunit"/>
    <property type="evidence" value="ECO:0000314"/>
    <property type="project" value="SGD"/>
</dbReference>
<dbReference type="GO" id="GO:0005739">
    <property type="term" value="C:mitochondrion"/>
    <property type="evidence" value="ECO:0007005"/>
    <property type="project" value="SGD"/>
</dbReference>
<dbReference type="GO" id="GO:0003735">
    <property type="term" value="F:structural constituent of ribosome"/>
    <property type="evidence" value="ECO:0000314"/>
    <property type="project" value="SGD"/>
</dbReference>
<dbReference type="GO" id="GO:0032543">
    <property type="term" value="P:mitochondrial translation"/>
    <property type="evidence" value="ECO:0000315"/>
    <property type="project" value="SGD"/>
</dbReference>
<dbReference type="Gene3D" id="6.20.130.10">
    <property type="match status" value="1"/>
</dbReference>
<dbReference type="InterPro" id="IPR034600">
    <property type="entry name" value="Ribosomal_bL31m"/>
</dbReference>
<dbReference type="InterPro" id="IPR048874">
    <property type="entry name" value="Ribosomal_bL31m_N"/>
</dbReference>
<dbReference type="PANTHER" id="PTHR28174">
    <property type="entry name" value="54S RIBOSOMAL PROTEIN L36, MITOCHONDRIAL"/>
    <property type="match status" value="1"/>
</dbReference>
<dbReference type="PANTHER" id="PTHR28174:SF1">
    <property type="entry name" value="LARGE RIBOSOMAL SUBUNIT PROTEIN BL31M"/>
    <property type="match status" value="1"/>
</dbReference>
<dbReference type="Pfam" id="PF21492">
    <property type="entry name" value="bL31_N"/>
    <property type="match status" value="1"/>
</dbReference>
<keyword id="KW-0002">3D-structure</keyword>
<keyword id="KW-0903">Direct protein sequencing</keyword>
<keyword id="KW-0496">Mitochondrion</keyword>
<keyword id="KW-1185">Reference proteome</keyword>
<keyword id="KW-0687">Ribonucleoprotein</keyword>
<keyword id="KW-0689">Ribosomal protein</keyword>
<keyword id="KW-0809">Transit peptide</keyword>
<comment type="function">
    <text evidence="2 6 12 13">Component of the mitochondrial ribosome (mitoribosome), a dedicated translation machinery responsible for the synthesis of mitochondrial genome-encoded proteins, including at least some of the essential transmembrane subunits of the mitochondrial respiratory chain. The mitoribosomes are attached to the mitochondrial inner membrane and translation products are cotranslationally integrated into the membrane (PubMed:24675956, PubMed:25609543). Overexpression of bL31m suppresses mutations in the COX2 leader peptide-encoding and initiation codon regions (PubMed:11259585, PubMed:15166137).</text>
</comment>
<comment type="subunit">
    <text evidence="3 7 8">Component of the mitochondrial large ribosomal subunit (mt-LSU). Mature yeast 74S mitochondrial ribosomes consist of a small (37S) and a large (54S) subunit. The 37S small subunit contains a 15S ribosomal RNA (15S mt-rRNA) and 34 different proteins. The 54S large subunit contains a 21S rRNA (21S mt-rRNA) and 46 different proteins.</text>
</comment>
<comment type="subcellular location">
    <subcellularLocation>
        <location evidence="4 5">Mitochondrion</location>
    </subcellularLocation>
    <text evidence="9">Mitoribosomes are tethered to the mitochondrial inner membrane and spatially aligned with the membrane insertion machinery through two distinct membrane contact sites, formed by the 21S rRNA expansion segment 96-ES1 and the inner membrane protein MBA1.</text>
</comment>
<comment type="domain">
    <text evidence="6">Contains two functional domains. The central domain is sufficient for general mitochondrial translation but not suppression of COX2 mutants. The C-terminus sequence is sufficient for dosage suppression of COX2 mutants.</text>
</comment>
<comment type="similarity">
    <text evidence="11">Belongs to the bacterial ribosomal protein bL31 family. Highly divergent.</text>
</comment>
<comment type="sequence caution" evidence="11">
    <conflict type="erroneous initiation">
        <sequence resource="EMBL-CDS" id="CAA55624"/>
    </conflict>
</comment>
<comment type="sequence caution" evidence="11">
    <conflict type="erroneous initiation">
        <sequence resource="EMBL-CDS" id="CAA85079"/>
    </conflict>
</comment>
<accession>P36531</accession>
<accession>D6VQC0</accession>
<proteinExistence type="evidence at protein level"/>
<sequence length="177" mass="20091">MLKSIFAKRFASTGSYPGSTRITLPRRPAKKIQLGKSRPAIYHQFNVKMELSDGSVVIRRSQYPKGEIRLIQDQRNNPLWNPSRDDLVVVDANSGGSLDRFNKRYSSLFSVDSTTPNSSSETVELSEENKKKTQIKKEEKEDVSEKAFGMDDYLSLLDDSEQQIKSGKLASKKRDKK</sequence>
<gene>
    <name type="primary">MRPL36</name>
    <name type="ordered locus">YBR122C</name>
    <name type="ORF">YBR0918</name>
</gene>
<feature type="transit peptide" description="Mitochondrion" evidence="7">
    <location>
        <begin position="1"/>
        <end position="14"/>
    </location>
</feature>
<feature type="chain" id="PRO_0000030580" description="Large ribosomal subunit protein bL31m">
    <location>
        <begin position="15"/>
        <end position="177"/>
    </location>
</feature>
<feature type="region of interest" description="Sufficient for general mitochondrial translation">
    <location>
        <begin position="36"/>
        <end position="118"/>
    </location>
</feature>
<feature type="region of interest" description="Sufficient for dosage suppression of COX2 mutation">
    <location>
        <begin position="87"/>
        <end position="177"/>
    </location>
</feature>
<feature type="region of interest" description="Disordered" evidence="1">
    <location>
        <begin position="111"/>
        <end position="144"/>
    </location>
</feature>
<feature type="compositionally biased region" description="Polar residues" evidence="1">
    <location>
        <begin position="111"/>
        <end position="123"/>
    </location>
</feature>
<feature type="compositionally biased region" description="Basic and acidic residues" evidence="1">
    <location>
        <begin position="127"/>
        <end position="144"/>
    </location>
</feature>
<name>RM36_YEAST</name>
<protein>
    <recommendedName>
        <fullName evidence="10">Large ribosomal subunit protein bL31m</fullName>
    </recommendedName>
    <alternativeName>
        <fullName>54S ribosomal protein L36, mitochondrial</fullName>
    </alternativeName>
    <alternativeName>
        <fullName>YmL36</fullName>
    </alternativeName>
</protein>